<proteinExistence type="evidence at protein level"/>
<comment type="function">
    <text evidence="2">Uptake of alpha-ketoglutarate across the boundary membrane with the concomitant import of a cation (symport system).</text>
</comment>
<comment type="subcellular location">
    <subcellularLocation>
        <location evidence="1">Cell inner membrane</location>
        <topology evidence="1">Multi-pass membrane protein</topology>
    </subcellularLocation>
</comment>
<comment type="similarity">
    <text evidence="3">Belongs to the major facilitator superfamily. Metabolite:H+ Symporter (MHS) family (TC 2.A.1.6) family.</text>
</comment>
<gene>
    <name type="primary">kgtP</name>
    <name type="synonym">witA</name>
    <name type="ordered locus">b2587</name>
    <name type="ordered locus">JW2571</name>
</gene>
<protein>
    <recommendedName>
        <fullName>Alpha-ketoglutarate permease</fullName>
    </recommendedName>
</protein>
<feature type="chain" id="PRO_0000050306" description="Alpha-ketoglutarate permease">
    <location>
        <begin position="1"/>
        <end position="432"/>
    </location>
</feature>
<feature type="topological domain" description="Cytoplasmic" evidence="4">
    <location>
        <begin position="1"/>
        <end position="32"/>
    </location>
</feature>
<feature type="transmembrane region" description="Helical; Name=1" evidence="3">
    <location>
        <begin position="33"/>
        <end position="53"/>
    </location>
</feature>
<feature type="topological domain" description="Periplasmic" evidence="4">
    <location>
        <begin position="54"/>
        <end position="62"/>
    </location>
</feature>
<feature type="transmembrane region" description="Helical; Name=2" evidence="3">
    <location>
        <begin position="63"/>
        <end position="83"/>
    </location>
</feature>
<feature type="topological domain" description="Cytoplasmic" evidence="4">
    <location>
        <begin position="84"/>
        <end position="95"/>
    </location>
</feature>
<feature type="transmembrane region" description="Helical; Name=3" evidence="3">
    <location>
        <begin position="96"/>
        <end position="116"/>
    </location>
</feature>
<feature type="topological domain" description="Periplasmic" evidence="4">
    <location>
        <begin position="117"/>
        <end position="118"/>
    </location>
</feature>
<feature type="transmembrane region" description="Helical; Name=4" evidence="3">
    <location>
        <begin position="119"/>
        <end position="139"/>
    </location>
</feature>
<feature type="topological domain" description="Cytoplasmic" evidence="4">
    <location>
        <begin position="140"/>
        <end position="162"/>
    </location>
</feature>
<feature type="transmembrane region" description="Helical; Name=5" evidence="3">
    <location>
        <begin position="163"/>
        <end position="183"/>
    </location>
</feature>
<feature type="topological domain" description="Periplasmic" evidence="4">
    <location>
        <begin position="184"/>
        <end position="193"/>
    </location>
</feature>
<feature type="transmembrane region" description="Helical; Name=6" evidence="3">
    <location>
        <begin position="194"/>
        <end position="214"/>
    </location>
</feature>
<feature type="topological domain" description="Cytoplasmic" evidence="4">
    <location>
        <begin position="215"/>
        <end position="243"/>
    </location>
</feature>
<feature type="transmembrane region" description="Helical; Name=7" evidence="3">
    <location>
        <begin position="244"/>
        <end position="264"/>
    </location>
</feature>
<feature type="topological domain" description="Periplasmic" evidence="4">
    <location>
        <begin position="265"/>
        <end position="279"/>
    </location>
</feature>
<feature type="transmembrane region" description="Helical; Name=8" evidence="3">
    <location>
        <begin position="280"/>
        <end position="300"/>
    </location>
</feature>
<feature type="topological domain" description="Cytoplasmic" evidence="4">
    <location>
        <begin position="301"/>
        <end position="309"/>
    </location>
</feature>
<feature type="transmembrane region" description="Helical; Name=9" evidence="3">
    <location>
        <begin position="310"/>
        <end position="330"/>
    </location>
</feature>
<feature type="topological domain" description="Periplasmic" evidence="4">
    <location>
        <begin position="331"/>
        <end position="339"/>
    </location>
</feature>
<feature type="transmembrane region" description="Helical; Name=10" evidence="3">
    <location>
        <begin position="340"/>
        <end position="360"/>
    </location>
</feature>
<feature type="topological domain" description="Cytoplasmic" evidence="4">
    <location>
        <begin position="361"/>
        <end position="373"/>
    </location>
</feature>
<feature type="transmembrane region" description="Helical; Name=11" evidence="3">
    <location>
        <begin position="374"/>
        <end position="394"/>
    </location>
</feature>
<feature type="topological domain" description="Periplasmic" evidence="4">
    <location>
        <begin position="395"/>
        <end position="402"/>
    </location>
</feature>
<feature type="transmembrane region" description="Helical; Name=12" evidence="3">
    <location>
        <begin position="403"/>
        <end position="423"/>
    </location>
</feature>
<feature type="topological domain" description="Cytoplasmic" evidence="4">
    <location>
        <begin position="424"/>
        <end position="432"/>
    </location>
</feature>
<accession>P0AEX3</accession>
<accession>P17448</accession>
<dbReference type="EMBL" id="X53027">
    <property type="protein sequence ID" value="CAA37198.1"/>
    <property type="molecule type" value="Genomic_DNA"/>
</dbReference>
<dbReference type="EMBL" id="U00096">
    <property type="protein sequence ID" value="AAC75640.1"/>
    <property type="molecule type" value="Genomic_DNA"/>
</dbReference>
<dbReference type="EMBL" id="AP009048">
    <property type="protein sequence ID" value="BAA16472.1"/>
    <property type="molecule type" value="Genomic_DNA"/>
</dbReference>
<dbReference type="EMBL" id="X56780">
    <property type="protein sequence ID" value="CAA40099.1"/>
    <property type="status" value="ALT_TERM"/>
    <property type="molecule type" value="Genomic_DNA"/>
</dbReference>
<dbReference type="EMBL" id="X52363">
    <property type="protein sequence ID" value="CAA36589.1"/>
    <property type="molecule type" value="Genomic_DNA"/>
</dbReference>
<dbReference type="PIR" id="JN0080">
    <property type="entry name" value="JN0080"/>
</dbReference>
<dbReference type="RefSeq" id="NP_417082.1">
    <property type="nucleotide sequence ID" value="NC_000913.3"/>
</dbReference>
<dbReference type="RefSeq" id="WP_000841103.1">
    <property type="nucleotide sequence ID" value="NZ_STEB01000011.1"/>
</dbReference>
<dbReference type="SMR" id="P0AEX3"/>
<dbReference type="BioGRID" id="4260613">
    <property type="interactions" value="10"/>
</dbReference>
<dbReference type="FunCoup" id="P0AEX3">
    <property type="interactions" value="18"/>
</dbReference>
<dbReference type="STRING" id="511145.b2587"/>
<dbReference type="TCDB" id="2.A.1.6.2">
    <property type="family name" value="the major facilitator superfamily (mfs)"/>
</dbReference>
<dbReference type="jPOST" id="P0AEX3"/>
<dbReference type="PaxDb" id="511145-b2587"/>
<dbReference type="EnsemblBacteria" id="AAC75640">
    <property type="protein sequence ID" value="AAC75640"/>
    <property type="gene ID" value="b2587"/>
</dbReference>
<dbReference type="GeneID" id="75206281"/>
<dbReference type="GeneID" id="947069"/>
<dbReference type="KEGG" id="ecj:JW2571"/>
<dbReference type="KEGG" id="eco:b2587"/>
<dbReference type="KEGG" id="ecoc:C3026_14335"/>
<dbReference type="PATRIC" id="fig|1411691.4.peg.4147"/>
<dbReference type="EchoBASE" id="EB0517"/>
<dbReference type="eggNOG" id="COG0477">
    <property type="taxonomic scope" value="Bacteria"/>
</dbReference>
<dbReference type="HOGENOM" id="CLU_001265_39_0_6"/>
<dbReference type="InParanoid" id="P0AEX3"/>
<dbReference type="OMA" id="DWYVYAS"/>
<dbReference type="OrthoDB" id="3690818at2"/>
<dbReference type="PhylomeDB" id="P0AEX3"/>
<dbReference type="BioCyc" id="EcoCyc:KGTP-MONOMER"/>
<dbReference type="BioCyc" id="MetaCyc:KGTP-MONOMER"/>
<dbReference type="PRO" id="PR:P0AEX3"/>
<dbReference type="Proteomes" id="UP000000625">
    <property type="component" value="Chromosome"/>
</dbReference>
<dbReference type="GO" id="GO:0005886">
    <property type="term" value="C:plasma membrane"/>
    <property type="evidence" value="ECO:0000314"/>
    <property type="project" value="EcoCyc"/>
</dbReference>
<dbReference type="GO" id="GO:0015294">
    <property type="term" value="F:solute:monoatomic cation symporter activity"/>
    <property type="evidence" value="ECO:0000314"/>
    <property type="project" value="EcoCyc"/>
</dbReference>
<dbReference type="CDD" id="cd17367">
    <property type="entry name" value="MFS_KgtP"/>
    <property type="match status" value="1"/>
</dbReference>
<dbReference type="FunFam" id="1.20.1250.20:FF:000095">
    <property type="entry name" value="Alpha-ketoglutarate permease"/>
    <property type="match status" value="1"/>
</dbReference>
<dbReference type="Gene3D" id="1.20.1250.20">
    <property type="entry name" value="MFS general substrate transporter like domains"/>
    <property type="match status" value="1"/>
</dbReference>
<dbReference type="InterPro" id="IPR051084">
    <property type="entry name" value="H+-coupled_symporters"/>
</dbReference>
<dbReference type="InterPro" id="IPR011701">
    <property type="entry name" value="MFS"/>
</dbReference>
<dbReference type="InterPro" id="IPR020846">
    <property type="entry name" value="MFS_dom"/>
</dbReference>
<dbReference type="InterPro" id="IPR036259">
    <property type="entry name" value="MFS_trans_sf"/>
</dbReference>
<dbReference type="InterPro" id="IPR004736">
    <property type="entry name" value="MHS_symport"/>
</dbReference>
<dbReference type="InterPro" id="IPR005829">
    <property type="entry name" value="Sugar_transporter_CS"/>
</dbReference>
<dbReference type="NCBIfam" id="TIGR00883">
    <property type="entry name" value="2A0106"/>
    <property type="match status" value="1"/>
</dbReference>
<dbReference type="NCBIfam" id="NF007710">
    <property type="entry name" value="PRK10406.1"/>
    <property type="match status" value="1"/>
</dbReference>
<dbReference type="PANTHER" id="PTHR43528">
    <property type="entry name" value="ALPHA-KETOGLUTARATE PERMEASE"/>
    <property type="match status" value="1"/>
</dbReference>
<dbReference type="PANTHER" id="PTHR43528:SF1">
    <property type="entry name" value="ALPHA-KETOGLUTARATE PERMEASE"/>
    <property type="match status" value="1"/>
</dbReference>
<dbReference type="Pfam" id="PF07690">
    <property type="entry name" value="MFS_1"/>
    <property type="match status" value="1"/>
</dbReference>
<dbReference type="SUPFAM" id="SSF103473">
    <property type="entry name" value="MFS general substrate transporter"/>
    <property type="match status" value="1"/>
</dbReference>
<dbReference type="PROSITE" id="PS50850">
    <property type="entry name" value="MFS"/>
    <property type="match status" value="1"/>
</dbReference>
<dbReference type="PROSITE" id="PS00216">
    <property type="entry name" value="SUGAR_TRANSPORT_1"/>
    <property type="match status" value="1"/>
</dbReference>
<dbReference type="PROSITE" id="PS00217">
    <property type="entry name" value="SUGAR_TRANSPORT_2"/>
    <property type="match status" value="1"/>
</dbReference>
<organism>
    <name type="scientific">Escherichia coli (strain K12)</name>
    <dbReference type="NCBI Taxonomy" id="83333"/>
    <lineage>
        <taxon>Bacteria</taxon>
        <taxon>Pseudomonadati</taxon>
        <taxon>Pseudomonadota</taxon>
        <taxon>Gammaproteobacteria</taxon>
        <taxon>Enterobacterales</taxon>
        <taxon>Enterobacteriaceae</taxon>
        <taxon>Escherichia</taxon>
    </lineage>
</organism>
<evidence type="ECO:0000269" key="1">
    <source>
    </source>
</evidence>
<evidence type="ECO:0000269" key="2">
    <source>
    </source>
</evidence>
<evidence type="ECO:0000305" key="3"/>
<evidence type="ECO:0000305" key="4">
    <source>
    </source>
</evidence>
<keyword id="KW-0997">Cell inner membrane</keyword>
<keyword id="KW-1003">Cell membrane</keyword>
<keyword id="KW-0472">Membrane</keyword>
<keyword id="KW-1185">Reference proteome</keyword>
<keyword id="KW-0769">Symport</keyword>
<keyword id="KW-0812">Transmembrane</keyword>
<keyword id="KW-1133">Transmembrane helix</keyword>
<keyword id="KW-0813">Transport</keyword>
<reference key="1">
    <citation type="journal article" date="1990" name="J. Bacteriol.">
        <title>A new gene located between pss and rrnG on the Escherichia coli chromosome.</title>
        <authorList>
            <person name="Seol W."/>
            <person name="Shatkin A.J."/>
        </authorList>
    </citation>
    <scope>NUCLEOTIDE SEQUENCE [GENOMIC DNA]</scope>
    <source>
        <strain>K12</strain>
    </source>
</reference>
<reference key="2">
    <citation type="journal article" date="1997" name="DNA Res.">
        <title>Construction of a contiguous 874-kb sequence of the Escherichia coli-K12 genome corresponding to 50.0-68.8 min on the linkage map and analysis of its sequence features.</title>
        <authorList>
            <person name="Yamamoto Y."/>
            <person name="Aiba H."/>
            <person name="Baba T."/>
            <person name="Hayashi K."/>
            <person name="Inada T."/>
            <person name="Isono K."/>
            <person name="Itoh T."/>
            <person name="Kimura S."/>
            <person name="Kitagawa M."/>
            <person name="Makino K."/>
            <person name="Miki T."/>
            <person name="Mitsuhashi N."/>
            <person name="Mizobuchi K."/>
            <person name="Mori H."/>
            <person name="Nakade S."/>
            <person name="Nakamura Y."/>
            <person name="Nashimoto H."/>
            <person name="Oshima T."/>
            <person name="Oyama S."/>
            <person name="Saito N."/>
            <person name="Sampei G."/>
            <person name="Satoh Y."/>
            <person name="Sivasundaram S."/>
            <person name="Tagami H."/>
            <person name="Takahashi H."/>
            <person name="Takeda J."/>
            <person name="Takemoto K."/>
            <person name="Uehara K."/>
            <person name="Wada C."/>
            <person name="Yamagata S."/>
            <person name="Horiuchi T."/>
        </authorList>
    </citation>
    <scope>NUCLEOTIDE SEQUENCE [LARGE SCALE GENOMIC DNA]</scope>
    <source>
        <strain>K12 / W3110 / ATCC 27325 / DSM 5911</strain>
    </source>
</reference>
<reference key="3">
    <citation type="journal article" date="1997" name="Science">
        <title>The complete genome sequence of Escherichia coli K-12.</title>
        <authorList>
            <person name="Blattner F.R."/>
            <person name="Plunkett G. III"/>
            <person name="Bloch C.A."/>
            <person name="Perna N.T."/>
            <person name="Burland V."/>
            <person name="Riley M."/>
            <person name="Collado-Vides J."/>
            <person name="Glasner J.D."/>
            <person name="Rode C.K."/>
            <person name="Mayhew G.F."/>
            <person name="Gregor J."/>
            <person name="Davis N.W."/>
            <person name="Kirkpatrick H.A."/>
            <person name="Goeden M.A."/>
            <person name="Rose D.J."/>
            <person name="Mau B."/>
            <person name="Shao Y."/>
        </authorList>
    </citation>
    <scope>NUCLEOTIDE SEQUENCE [LARGE SCALE GENOMIC DNA]</scope>
    <source>
        <strain>K12 / MG1655 / ATCC 47076</strain>
    </source>
</reference>
<reference key="4">
    <citation type="journal article" date="2006" name="Mol. Syst. Biol.">
        <title>Highly accurate genome sequences of Escherichia coli K-12 strains MG1655 and W3110.</title>
        <authorList>
            <person name="Hayashi K."/>
            <person name="Morooka N."/>
            <person name="Yamamoto Y."/>
            <person name="Fujita K."/>
            <person name="Isono K."/>
            <person name="Choi S."/>
            <person name="Ohtsubo E."/>
            <person name="Baba T."/>
            <person name="Wanner B.L."/>
            <person name="Mori H."/>
            <person name="Horiuchi T."/>
        </authorList>
    </citation>
    <scope>NUCLEOTIDE SEQUENCE [LARGE SCALE GENOMIC DNA]</scope>
    <source>
        <strain>K12 / W3110 / ATCC 27325 / DSM 5911</strain>
    </source>
</reference>
<reference key="5">
    <citation type="journal article" date="1991" name="Nucleic Acids Res.">
        <title>Transcriptional termination sequence at the end of the Escherichia coli ribosomal RNA G operon: complex terminators and antitermination.</title>
        <authorList>
            <person name="Albrechtsen B."/>
            <person name="Ross B.M."/>
            <person name="Squires C."/>
            <person name="Squires C.L."/>
        </authorList>
    </citation>
    <scope>NUCLEOTIDE SEQUENCE [GENOMIC DNA] OF 1-183</scope>
</reference>
<reference key="6">
    <citation type="journal article" date="1990" name="Nucleic Acids Res.">
        <title>Sequence of the distal end of E. coli ribosomal RNA rrnG operon.</title>
        <authorList>
            <person name="Seol W."/>
            <person name="Shatkin A.J."/>
        </authorList>
    </citation>
    <scope>NUCLEOTIDE SEQUENCE [GENOMIC DNA] OF 1-14</scope>
    <source>
        <strain>K12</strain>
    </source>
</reference>
<reference key="7">
    <citation type="journal article" date="1991" name="Proc. Natl. Acad. Sci. U.S.A.">
        <title>Escherichia coli kgtP encodes an alpha-ketoglutarate transporter.</title>
        <authorList>
            <person name="Seol W."/>
            <person name="Shatkin A.J."/>
        </authorList>
    </citation>
    <scope>FUNCTION</scope>
</reference>
<reference key="8">
    <citation type="journal article" date="1993" name="J. Bacteriol.">
        <title>Membrane topology model of Escherichia coli alpha-ketoglutarate permease by phoA fusion analysis.</title>
        <authorList>
            <person name="Seol W."/>
            <person name="Shatkin A.J."/>
        </authorList>
    </citation>
    <scope>TOPOLOGY</scope>
</reference>
<reference key="9">
    <citation type="journal article" date="2005" name="Science">
        <title>Global topology analysis of the Escherichia coli inner membrane proteome.</title>
        <authorList>
            <person name="Daley D.O."/>
            <person name="Rapp M."/>
            <person name="Granseth E."/>
            <person name="Melen K."/>
            <person name="Drew D."/>
            <person name="von Heijne G."/>
        </authorList>
    </citation>
    <scope>SUBCELLULAR LOCATION</scope>
    <source>
        <strain>K12 / MG1655 / ATCC 47076</strain>
    </source>
</reference>
<name>KGTP_ECOLI</name>
<sequence length="432" mass="47052">MAESTVTADSKLTSSDTRRRIWAIVGASSGNLVEWFDFYVYSFCSLYFAHIFFPSGNTTTQLLQTAGVFAAGFLMRPIGGWLFGRIADKHGRKKSMLLSVCMMCFGSLVIACLPGYETIGTWAPALLLLARLFQGLSVGGEYGTSATYMSEVAVEGRKGFYASFQYVTLIGGQLLALLVVVVLQHTMEDAALREWGWRIPFALGAVLAVVALWLRRQLDETSQQETRALKEAGSLKGLWRNRRAFIMVLGFTAAGSLCFYTFTTYMQKYLVNTAGMHANVASGIMTAALFVFMLIQPLIGALSDKIGRRTSMLCFGSLAAIFTVPILSALQNVSSPYAAFGLVMCALLIVSFYTSISGILKAEMFPAQVRALGVGLSYAVANAIFGGSAEYVALSLKSIGMETAFFWYVTLMAVVAFLVSLMLHRKGKGMRL</sequence>